<name>MURC_MYCVP</name>
<comment type="function">
    <text evidence="1">Cell wall formation.</text>
</comment>
<comment type="catalytic activity">
    <reaction evidence="1">
        <text>UDP-N-acetyl-alpha-D-muramate + L-alanine + ATP = UDP-N-acetyl-alpha-D-muramoyl-L-alanine + ADP + phosphate + H(+)</text>
        <dbReference type="Rhea" id="RHEA:23372"/>
        <dbReference type="ChEBI" id="CHEBI:15378"/>
        <dbReference type="ChEBI" id="CHEBI:30616"/>
        <dbReference type="ChEBI" id="CHEBI:43474"/>
        <dbReference type="ChEBI" id="CHEBI:57972"/>
        <dbReference type="ChEBI" id="CHEBI:70757"/>
        <dbReference type="ChEBI" id="CHEBI:83898"/>
        <dbReference type="ChEBI" id="CHEBI:456216"/>
        <dbReference type="EC" id="6.3.2.8"/>
    </reaction>
</comment>
<comment type="pathway">
    <text evidence="1">Cell wall biogenesis; peptidoglycan biosynthesis.</text>
</comment>
<comment type="subcellular location">
    <subcellularLocation>
        <location evidence="1">Cytoplasm</location>
    </subcellularLocation>
</comment>
<comment type="similarity">
    <text evidence="1">Belongs to the MurCDEF family.</text>
</comment>
<gene>
    <name evidence="1" type="primary">murC</name>
    <name type="ordered locus">Mvan_3522</name>
</gene>
<organism>
    <name type="scientific">Mycolicibacterium vanbaalenii (strain DSM 7251 / JCM 13017 / BCRC 16820 / KCTC 9966 / NRRL B-24157 / PYR-1)</name>
    <name type="common">Mycobacterium vanbaalenii</name>
    <dbReference type="NCBI Taxonomy" id="350058"/>
    <lineage>
        <taxon>Bacteria</taxon>
        <taxon>Bacillati</taxon>
        <taxon>Actinomycetota</taxon>
        <taxon>Actinomycetes</taxon>
        <taxon>Mycobacteriales</taxon>
        <taxon>Mycobacteriaceae</taxon>
        <taxon>Mycolicibacterium</taxon>
    </lineage>
</organism>
<proteinExistence type="inferred from homology"/>
<evidence type="ECO:0000255" key="1">
    <source>
        <dbReference type="HAMAP-Rule" id="MF_00046"/>
    </source>
</evidence>
<feature type="chain" id="PRO_0000336845" description="UDP-N-acetylmuramate--L-alanine ligase">
    <location>
        <begin position="1"/>
        <end position="478"/>
    </location>
</feature>
<feature type="binding site" evidence="1">
    <location>
        <begin position="126"/>
        <end position="132"/>
    </location>
    <ligand>
        <name>ATP</name>
        <dbReference type="ChEBI" id="CHEBI:30616"/>
    </ligand>
</feature>
<sequence>MTVPGHRTDLPAELQRVHMVGIGGAGMSGIARILLDRGGLVSGSDAKESRGVIALRARGAEIRIGHDPSALDMLAGGPTAVVTTHAAIPKTNPELVEARRRGIPVLLRPAVLARLMAGHTTLMVTGTHGKTTTTSMLIVALQHSGFDPSFAVGGDLGEAGTNAHHGSGSSFVAEADESDGSLLEYRPDIVVVTNIEADHLDFFGSVEAYTEVFDRFAGRIDPGGALVVCVDDPGARALAERLSGSGLRVLRYGSTGTGALDATLLEWTQQGTGAVASIALRTEARPLTMRLSVPGRHMALNALGALLAAREAGADLESVLDGLAGFEGVRRRFELVGSANGVRVFDDYAHHPTEVRATLTALRAVVDQAGSGRAIVVFQPHLYSRTVTFASEFGAALSAADEVFVLDVYAAREQPLAGVSGATVADAVSAPVTYLPDFSAVAARVAASVAPGDVVVTMGAGDVTLLGREILAEVEARA</sequence>
<accession>A1TAW7</accession>
<dbReference type="EC" id="6.3.2.8" evidence="1"/>
<dbReference type="EMBL" id="CP000511">
    <property type="protein sequence ID" value="ABM14317.1"/>
    <property type="molecule type" value="Genomic_DNA"/>
</dbReference>
<dbReference type="SMR" id="A1TAW7"/>
<dbReference type="STRING" id="350058.Mvan_3522"/>
<dbReference type="KEGG" id="mva:Mvan_3522"/>
<dbReference type="eggNOG" id="COG0773">
    <property type="taxonomic scope" value="Bacteria"/>
</dbReference>
<dbReference type="HOGENOM" id="CLU_028104_2_2_11"/>
<dbReference type="UniPathway" id="UPA00219"/>
<dbReference type="Proteomes" id="UP000009159">
    <property type="component" value="Chromosome"/>
</dbReference>
<dbReference type="GO" id="GO:0005737">
    <property type="term" value="C:cytoplasm"/>
    <property type="evidence" value="ECO:0007669"/>
    <property type="project" value="UniProtKB-SubCell"/>
</dbReference>
<dbReference type="GO" id="GO:0005524">
    <property type="term" value="F:ATP binding"/>
    <property type="evidence" value="ECO:0007669"/>
    <property type="project" value="UniProtKB-UniRule"/>
</dbReference>
<dbReference type="GO" id="GO:0008763">
    <property type="term" value="F:UDP-N-acetylmuramate-L-alanine ligase activity"/>
    <property type="evidence" value="ECO:0007669"/>
    <property type="project" value="UniProtKB-UniRule"/>
</dbReference>
<dbReference type="GO" id="GO:0051301">
    <property type="term" value="P:cell division"/>
    <property type="evidence" value="ECO:0007669"/>
    <property type="project" value="UniProtKB-KW"/>
</dbReference>
<dbReference type="GO" id="GO:0071555">
    <property type="term" value="P:cell wall organization"/>
    <property type="evidence" value="ECO:0007669"/>
    <property type="project" value="UniProtKB-KW"/>
</dbReference>
<dbReference type="GO" id="GO:0009252">
    <property type="term" value="P:peptidoglycan biosynthetic process"/>
    <property type="evidence" value="ECO:0007669"/>
    <property type="project" value="UniProtKB-UniRule"/>
</dbReference>
<dbReference type="GO" id="GO:0008360">
    <property type="term" value="P:regulation of cell shape"/>
    <property type="evidence" value="ECO:0007669"/>
    <property type="project" value="UniProtKB-KW"/>
</dbReference>
<dbReference type="FunFam" id="3.40.50.720:FF:000046">
    <property type="entry name" value="UDP-N-acetylmuramate--L-alanine ligase"/>
    <property type="match status" value="1"/>
</dbReference>
<dbReference type="Gene3D" id="3.90.190.20">
    <property type="entry name" value="Mur ligase, C-terminal domain"/>
    <property type="match status" value="1"/>
</dbReference>
<dbReference type="Gene3D" id="3.40.1190.10">
    <property type="entry name" value="Mur-like, catalytic domain"/>
    <property type="match status" value="1"/>
</dbReference>
<dbReference type="Gene3D" id="3.40.50.720">
    <property type="entry name" value="NAD(P)-binding Rossmann-like Domain"/>
    <property type="match status" value="1"/>
</dbReference>
<dbReference type="HAMAP" id="MF_00046">
    <property type="entry name" value="MurC"/>
    <property type="match status" value="1"/>
</dbReference>
<dbReference type="InterPro" id="IPR036565">
    <property type="entry name" value="Mur-like_cat_sf"/>
</dbReference>
<dbReference type="InterPro" id="IPR004101">
    <property type="entry name" value="Mur_ligase_C"/>
</dbReference>
<dbReference type="InterPro" id="IPR036615">
    <property type="entry name" value="Mur_ligase_C_dom_sf"/>
</dbReference>
<dbReference type="InterPro" id="IPR013221">
    <property type="entry name" value="Mur_ligase_cen"/>
</dbReference>
<dbReference type="InterPro" id="IPR000713">
    <property type="entry name" value="Mur_ligase_N"/>
</dbReference>
<dbReference type="InterPro" id="IPR050061">
    <property type="entry name" value="MurCDEF_pg_biosynth"/>
</dbReference>
<dbReference type="InterPro" id="IPR005758">
    <property type="entry name" value="UDP-N-AcMur_Ala_ligase_MurC"/>
</dbReference>
<dbReference type="NCBIfam" id="TIGR01082">
    <property type="entry name" value="murC"/>
    <property type="match status" value="1"/>
</dbReference>
<dbReference type="PANTHER" id="PTHR43445:SF3">
    <property type="entry name" value="UDP-N-ACETYLMURAMATE--L-ALANINE LIGASE"/>
    <property type="match status" value="1"/>
</dbReference>
<dbReference type="PANTHER" id="PTHR43445">
    <property type="entry name" value="UDP-N-ACETYLMURAMATE--L-ALANINE LIGASE-RELATED"/>
    <property type="match status" value="1"/>
</dbReference>
<dbReference type="Pfam" id="PF01225">
    <property type="entry name" value="Mur_ligase"/>
    <property type="match status" value="1"/>
</dbReference>
<dbReference type="Pfam" id="PF02875">
    <property type="entry name" value="Mur_ligase_C"/>
    <property type="match status" value="1"/>
</dbReference>
<dbReference type="Pfam" id="PF08245">
    <property type="entry name" value="Mur_ligase_M"/>
    <property type="match status" value="1"/>
</dbReference>
<dbReference type="SUPFAM" id="SSF51984">
    <property type="entry name" value="MurCD N-terminal domain"/>
    <property type="match status" value="1"/>
</dbReference>
<dbReference type="SUPFAM" id="SSF53623">
    <property type="entry name" value="MurD-like peptide ligases, catalytic domain"/>
    <property type="match status" value="1"/>
</dbReference>
<dbReference type="SUPFAM" id="SSF53244">
    <property type="entry name" value="MurD-like peptide ligases, peptide-binding domain"/>
    <property type="match status" value="1"/>
</dbReference>
<keyword id="KW-0067">ATP-binding</keyword>
<keyword id="KW-0131">Cell cycle</keyword>
<keyword id="KW-0132">Cell division</keyword>
<keyword id="KW-0133">Cell shape</keyword>
<keyword id="KW-0961">Cell wall biogenesis/degradation</keyword>
<keyword id="KW-0963">Cytoplasm</keyword>
<keyword id="KW-0436">Ligase</keyword>
<keyword id="KW-0547">Nucleotide-binding</keyword>
<keyword id="KW-0573">Peptidoglycan synthesis</keyword>
<protein>
    <recommendedName>
        <fullName evidence="1">UDP-N-acetylmuramate--L-alanine ligase</fullName>
        <ecNumber evidence="1">6.3.2.8</ecNumber>
    </recommendedName>
    <alternativeName>
        <fullName evidence="1">UDP-N-acetylmuramoyl-L-alanine synthetase</fullName>
    </alternativeName>
</protein>
<reference key="1">
    <citation type="submission" date="2006-12" db="EMBL/GenBank/DDBJ databases">
        <title>Complete sequence of Mycobacterium vanbaalenii PYR-1.</title>
        <authorList>
            <consortium name="US DOE Joint Genome Institute"/>
            <person name="Copeland A."/>
            <person name="Lucas S."/>
            <person name="Lapidus A."/>
            <person name="Barry K."/>
            <person name="Detter J.C."/>
            <person name="Glavina del Rio T."/>
            <person name="Hammon N."/>
            <person name="Israni S."/>
            <person name="Dalin E."/>
            <person name="Tice H."/>
            <person name="Pitluck S."/>
            <person name="Singan V."/>
            <person name="Schmutz J."/>
            <person name="Larimer F."/>
            <person name="Land M."/>
            <person name="Hauser L."/>
            <person name="Kyrpides N."/>
            <person name="Anderson I.J."/>
            <person name="Miller C."/>
            <person name="Richardson P."/>
        </authorList>
    </citation>
    <scope>NUCLEOTIDE SEQUENCE [LARGE SCALE GENOMIC DNA]</scope>
    <source>
        <strain>DSM 7251 / JCM 13017 / BCRC 16820 / KCTC 9966 / NRRL B-24157 / PYR-1</strain>
    </source>
</reference>